<dbReference type="EMBL" id="EF380351">
    <property type="protein sequence ID" value="ABQ45242.1"/>
    <property type="molecule type" value="Genomic_DNA"/>
</dbReference>
<dbReference type="RefSeq" id="YP_001294177.1">
    <property type="nucleotide sequence ID" value="NC_009599.1"/>
</dbReference>
<dbReference type="SMR" id="A6MM29"/>
<dbReference type="GeneID" id="5236938"/>
<dbReference type="GO" id="GO:0009535">
    <property type="term" value="C:chloroplast thylakoid membrane"/>
    <property type="evidence" value="ECO:0007669"/>
    <property type="project" value="UniProtKB-SubCell"/>
</dbReference>
<dbReference type="GO" id="GO:0009512">
    <property type="term" value="C:cytochrome b6f complex"/>
    <property type="evidence" value="ECO:0007669"/>
    <property type="project" value="InterPro"/>
</dbReference>
<dbReference type="GO" id="GO:0045158">
    <property type="term" value="F:electron transporter, transferring electrons within cytochrome b6/f complex of photosystem II activity"/>
    <property type="evidence" value="ECO:0007669"/>
    <property type="project" value="InterPro"/>
</dbReference>
<dbReference type="GO" id="GO:0017004">
    <property type="term" value="P:cytochrome complex assembly"/>
    <property type="evidence" value="ECO:0007669"/>
    <property type="project" value="UniProtKB-UniRule"/>
</dbReference>
<dbReference type="GO" id="GO:0015979">
    <property type="term" value="P:photosynthesis"/>
    <property type="evidence" value="ECO:0007669"/>
    <property type="project" value="UniProtKB-KW"/>
</dbReference>
<dbReference type="HAMAP" id="MF_00395">
    <property type="entry name" value="Cytb6_f_PetN"/>
    <property type="match status" value="1"/>
</dbReference>
<dbReference type="InterPro" id="IPR036143">
    <property type="entry name" value="Cytochr_b6-f_cplx_su8_sf"/>
</dbReference>
<dbReference type="InterPro" id="IPR005497">
    <property type="entry name" value="Cytochrome_b6-f_cplx_su8"/>
</dbReference>
<dbReference type="Pfam" id="PF03742">
    <property type="entry name" value="PetN"/>
    <property type="match status" value="1"/>
</dbReference>
<dbReference type="SUPFAM" id="SSF103451">
    <property type="entry name" value="PetN subunit of the cytochrome b6f complex"/>
    <property type="match status" value="1"/>
</dbReference>
<reference key="1">
    <citation type="journal article" date="2007" name="Mol. Phylogenet. Evol.">
        <title>Phylogenetic and evolutionary implications of complete chloroplast genome sequences of four early-diverging angiosperms: Buxus (Buxaceae), Chloranthus (Chloranthaceae), Dioscorea (Dioscoreaceae), and Illicium (Schisandraceae).</title>
        <authorList>
            <person name="Hansen D.R."/>
            <person name="Dastidar S.G."/>
            <person name="Cai Z."/>
            <person name="Penaflor C."/>
            <person name="Kuehl J.V."/>
            <person name="Boore J.L."/>
            <person name="Jansen R.K."/>
        </authorList>
    </citation>
    <scope>NUCLEOTIDE SEQUENCE [LARGE SCALE GENOMIC DNA]</scope>
</reference>
<comment type="function">
    <text evidence="1">Component of the cytochrome b6-f complex, which mediates electron transfer between photosystem II (PSII) and photosystem I (PSI), cyclic electron flow around PSI, and state transitions.</text>
</comment>
<comment type="subunit">
    <text evidence="1">The 4 large subunits of the cytochrome b6-f complex are cytochrome b6, subunit IV (17 kDa polypeptide, PetD), cytochrome f and the Rieske protein, while the 4 small subunits are PetG, PetL, PetM and PetN. The complex functions as a dimer.</text>
</comment>
<comment type="subcellular location">
    <subcellularLocation>
        <location evidence="1">Plastid</location>
        <location evidence="1">Chloroplast thylakoid membrane</location>
        <topology evidence="1">Single-pass membrane protein</topology>
    </subcellularLocation>
</comment>
<comment type="similarity">
    <text evidence="1">Belongs to the PetN family.</text>
</comment>
<keyword id="KW-0150">Chloroplast</keyword>
<keyword id="KW-0249">Electron transport</keyword>
<keyword id="KW-0472">Membrane</keyword>
<keyword id="KW-0602">Photosynthesis</keyword>
<keyword id="KW-0934">Plastid</keyword>
<keyword id="KW-0793">Thylakoid</keyword>
<keyword id="KW-0812">Transmembrane</keyword>
<keyword id="KW-1133">Transmembrane helix</keyword>
<keyword id="KW-0813">Transport</keyword>
<evidence type="ECO:0000255" key="1">
    <source>
        <dbReference type="HAMAP-Rule" id="MF_00395"/>
    </source>
</evidence>
<name>PETN_BUXMI</name>
<organism>
    <name type="scientific">Buxus microphylla</name>
    <name type="common">Littleleaf boxwood</name>
    <name type="synonym">Japanese boxwood</name>
    <dbReference type="NCBI Taxonomy" id="153571"/>
    <lineage>
        <taxon>Eukaryota</taxon>
        <taxon>Viridiplantae</taxon>
        <taxon>Streptophyta</taxon>
        <taxon>Embryophyta</taxon>
        <taxon>Tracheophyta</taxon>
        <taxon>Spermatophyta</taxon>
        <taxon>Magnoliopsida</taxon>
        <taxon>Buxales</taxon>
        <taxon>Buxaceae</taxon>
        <taxon>Buxus</taxon>
    </lineage>
</organism>
<sequence>MDIVSLAWAALMVVFTFSLSLVVWGRSGL</sequence>
<gene>
    <name evidence="1" type="primary">petN</name>
</gene>
<protein>
    <recommendedName>
        <fullName evidence="1">Cytochrome b6-f complex subunit 8</fullName>
    </recommendedName>
    <alternativeName>
        <fullName evidence="1">Cytochrome b6-f complex subunit PetN</fullName>
    </alternativeName>
    <alternativeName>
        <fullName evidence="1">Cytochrome b6-f complex subunit VIII</fullName>
    </alternativeName>
</protein>
<accession>A6MM29</accession>
<feature type="chain" id="PRO_0000355424" description="Cytochrome b6-f complex subunit 8">
    <location>
        <begin position="1"/>
        <end position="29"/>
    </location>
</feature>
<feature type="transmembrane region" description="Helical" evidence="1">
    <location>
        <begin position="3"/>
        <end position="23"/>
    </location>
</feature>
<proteinExistence type="inferred from homology"/>
<geneLocation type="chloroplast"/>